<keyword id="KW-0963">Cytoplasm</keyword>
<keyword id="KW-0489">Methyltransferase</keyword>
<keyword id="KW-1185">Reference proteome</keyword>
<keyword id="KW-0949">S-adenosyl-L-methionine</keyword>
<keyword id="KW-0808">Transferase</keyword>
<reference key="1">
    <citation type="journal article" date="2008" name="Proc. Natl. Acad. Sci. U.S.A.">
        <title>The genome of Cyanothece 51142, a unicellular diazotrophic cyanobacterium important in the marine nitrogen cycle.</title>
        <authorList>
            <person name="Welsh E.A."/>
            <person name="Liberton M."/>
            <person name="Stoeckel J."/>
            <person name="Loh T."/>
            <person name="Elvitigala T."/>
            <person name="Wang C."/>
            <person name="Wollam A."/>
            <person name="Fulton R.S."/>
            <person name="Clifton S.W."/>
            <person name="Jacobs J.M."/>
            <person name="Aurora R."/>
            <person name="Ghosh B.K."/>
            <person name="Sherman L.A."/>
            <person name="Smith R.D."/>
            <person name="Wilson R.K."/>
            <person name="Pakrasi H.B."/>
        </authorList>
    </citation>
    <scope>NUCLEOTIDE SEQUENCE [LARGE SCALE GENOMIC DNA]</scope>
    <source>
        <strain>ATCC 51142 / BH68</strain>
    </source>
</reference>
<comment type="function">
    <text evidence="1">Methylates ribosomal protein L11.</text>
</comment>
<comment type="catalytic activity">
    <reaction evidence="1">
        <text>L-lysyl-[protein] + 3 S-adenosyl-L-methionine = N(6),N(6),N(6)-trimethyl-L-lysyl-[protein] + 3 S-adenosyl-L-homocysteine + 3 H(+)</text>
        <dbReference type="Rhea" id="RHEA:54192"/>
        <dbReference type="Rhea" id="RHEA-COMP:9752"/>
        <dbReference type="Rhea" id="RHEA-COMP:13826"/>
        <dbReference type="ChEBI" id="CHEBI:15378"/>
        <dbReference type="ChEBI" id="CHEBI:29969"/>
        <dbReference type="ChEBI" id="CHEBI:57856"/>
        <dbReference type="ChEBI" id="CHEBI:59789"/>
        <dbReference type="ChEBI" id="CHEBI:61961"/>
    </reaction>
</comment>
<comment type="subcellular location">
    <subcellularLocation>
        <location evidence="1">Cytoplasm</location>
    </subcellularLocation>
</comment>
<comment type="similarity">
    <text evidence="1">Belongs to the methyltransferase superfamily. PrmA family.</text>
</comment>
<accession>B1WNQ4</accession>
<sequence>MSNSWWEITILCHPHLEESITWRLDKFGCSGTSREIKGKSYIIQAYAPQIQYQSLDISALSLWLQQDALVLNLPQPLTRWKLIDEEDWASSWKEHWEPTEVGDRFIIYPAWLTPPEQTDKLILRLDPGVAFGTGTHPTTQLCLESLEMRLSKSPENVVIADIGSGSGILSIGAILLGAKKAYAVDIDPLAVKAARENRHLNQIHPDHLVINQGSLTELLELVSDGVDGIVCNILAEVIIELIPQFSKLARPNTWGILSGILLEQSQAIADTLEQEGWIVAALWKRKQWCCFQIRKAPEN</sequence>
<evidence type="ECO:0000255" key="1">
    <source>
        <dbReference type="HAMAP-Rule" id="MF_00735"/>
    </source>
</evidence>
<gene>
    <name evidence="1" type="primary">prmA</name>
    <name type="ordered locus">cce_2133</name>
</gene>
<proteinExistence type="inferred from homology"/>
<dbReference type="EC" id="2.1.1.-" evidence="1"/>
<dbReference type="EMBL" id="CP000806">
    <property type="protein sequence ID" value="ACB51483.1"/>
    <property type="molecule type" value="Genomic_DNA"/>
</dbReference>
<dbReference type="RefSeq" id="WP_009546885.1">
    <property type="nucleotide sequence ID" value="NC_010546.1"/>
</dbReference>
<dbReference type="SMR" id="B1WNQ4"/>
<dbReference type="STRING" id="43989.cce_2133"/>
<dbReference type="KEGG" id="cyt:cce_2133"/>
<dbReference type="eggNOG" id="COG2264">
    <property type="taxonomic scope" value="Bacteria"/>
</dbReference>
<dbReference type="HOGENOM" id="CLU_049382_0_1_3"/>
<dbReference type="OrthoDB" id="9785995at2"/>
<dbReference type="Proteomes" id="UP000001203">
    <property type="component" value="Chromosome circular"/>
</dbReference>
<dbReference type="GO" id="GO:0005737">
    <property type="term" value="C:cytoplasm"/>
    <property type="evidence" value="ECO:0007669"/>
    <property type="project" value="UniProtKB-SubCell"/>
</dbReference>
<dbReference type="GO" id="GO:0016279">
    <property type="term" value="F:protein-lysine N-methyltransferase activity"/>
    <property type="evidence" value="ECO:0007669"/>
    <property type="project" value="RHEA"/>
</dbReference>
<dbReference type="GO" id="GO:0032259">
    <property type="term" value="P:methylation"/>
    <property type="evidence" value="ECO:0007669"/>
    <property type="project" value="UniProtKB-KW"/>
</dbReference>
<dbReference type="CDD" id="cd02440">
    <property type="entry name" value="AdoMet_MTases"/>
    <property type="match status" value="1"/>
</dbReference>
<dbReference type="Gene3D" id="3.40.50.150">
    <property type="entry name" value="Vaccinia Virus protein VP39"/>
    <property type="match status" value="1"/>
</dbReference>
<dbReference type="HAMAP" id="MF_00735">
    <property type="entry name" value="Methyltr_PrmA"/>
    <property type="match status" value="1"/>
</dbReference>
<dbReference type="InterPro" id="IPR050078">
    <property type="entry name" value="Ribosomal_L11_MeTrfase_PrmA"/>
</dbReference>
<dbReference type="InterPro" id="IPR004498">
    <property type="entry name" value="Ribosomal_PrmA_MeTrfase"/>
</dbReference>
<dbReference type="InterPro" id="IPR029063">
    <property type="entry name" value="SAM-dependent_MTases_sf"/>
</dbReference>
<dbReference type="NCBIfam" id="TIGR00406">
    <property type="entry name" value="prmA"/>
    <property type="match status" value="1"/>
</dbReference>
<dbReference type="PANTHER" id="PTHR43648">
    <property type="entry name" value="ELECTRON TRANSFER FLAVOPROTEIN BETA SUBUNIT LYSINE METHYLTRANSFERASE"/>
    <property type="match status" value="1"/>
</dbReference>
<dbReference type="PANTHER" id="PTHR43648:SF1">
    <property type="entry name" value="ELECTRON TRANSFER FLAVOPROTEIN BETA SUBUNIT LYSINE METHYLTRANSFERASE"/>
    <property type="match status" value="1"/>
</dbReference>
<dbReference type="Pfam" id="PF06325">
    <property type="entry name" value="PrmA"/>
    <property type="match status" value="1"/>
</dbReference>
<dbReference type="PIRSF" id="PIRSF000401">
    <property type="entry name" value="RPL11_MTase"/>
    <property type="match status" value="1"/>
</dbReference>
<dbReference type="SUPFAM" id="SSF53335">
    <property type="entry name" value="S-adenosyl-L-methionine-dependent methyltransferases"/>
    <property type="match status" value="1"/>
</dbReference>
<organism>
    <name type="scientific">Crocosphaera subtropica (strain ATCC 51142 / BH68)</name>
    <name type="common">Cyanothece sp. (strain ATCC 51142)</name>
    <dbReference type="NCBI Taxonomy" id="43989"/>
    <lineage>
        <taxon>Bacteria</taxon>
        <taxon>Bacillati</taxon>
        <taxon>Cyanobacteriota</taxon>
        <taxon>Cyanophyceae</taxon>
        <taxon>Oscillatoriophycideae</taxon>
        <taxon>Chroococcales</taxon>
        <taxon>Aphanothecaceae</taxon>
        <taxon>Crocosphaera</taxon>
        <taxon>Crocosphaera subtropica</taxon>
    </lineage>
</organism>
<protein>
    <recommendedName>
        <fullName evidence="1">Ribosomal protein L11 methyltransferase</fullName>
        <shortName evidence="1">L11 Mtase</shortName>
        <ecNumber evidence="1">2.1.1.-</ecNumber>
    </recommendedName>
</protein>
<name>PRMA_CROS5</name>
<feature type="chain" id="PRO_1000192611" description="Ribosomal protein L11 methyltransferase">
    <location>
        <begin position="1"/>
        <end position="299"/>
    </location>
</feature>
<feature type="binding site" evidence="1">
    <location>
        <position position="139"/>
    </location>
    <ligand>
        <name>S-adenosyl-L-methionine</name>
        <dbReference type="ChEBI" id="CHEBI:59789"/>
    </ligand>
</feature>
<feature type="binding site" evidence="1">
    <location>
        <position position="163"/>
    </location>
    <ligand>
        <name>S-adenosyl-L-methionine</name>
        <dbReference type="ChEBI" id="CHEBI:59789"/>
    </ligand>
</feature>
<feature type="binding site" evidence="1">
    <location>
        <position position="185"/>
    </location>
    <ligand>
        <name>S-adenosyl-L-methionine</name>
        <dbReference type="ChEBI" id="CHEBI:59789"/>
    </ligand>
</feature>
<feature type="binding site" evidence="1">
    <location>
        <position position="232"/>
    </location>
    <ligand>
        <name>S-adenosyl-L-methionine</name>
        <dbReference type="ChEBI" id="CHEBI:59789"/>
    </ligand>
</feature>